<feature type="initiator methionine" description="Removed" evidence="2">
    <location>
        <position position="1"/>
    </location>
</feature>
<feature type="chain" id="PRO_0000346793" description="Rab GTPase-binding effector protein 2">
    <location>
        <begin position="2"/>
        <end position="569"/>
    </location>
</feature>
<feature type="region of interest" description="Disordered" evidence="4">
    <location>
        <begin position="1"/>
        <end position="38"/>
    </location>
</feature>
<feature type="region of interest" description="Disordered" evidence="4">
    <location>
        <begin position="181"/>
        <end position="267"/>
    </location>
</feature>
<feature type="region of interest" description="Disordered" evidence="4">
    <location>
        <begin position="388"/>
        <end position="414"/>
    </location>
</feature>
<feature type="coiled-coil region" evidence="3">
    <location>
        <begin position="34"/>
        <end position="184"/>
    </location>
</feature>
<feature type="coiled-coil region" evidence="3">
    <location>
        <begin position="292"/>
        <end position="391"/>
    </location>
</feature>
<feature type="coiled-coil region" evidence="3">
    <location>
        <begin position="423"/>
        <end position="523"/>
    </location>
</feature>
<feature type="compositionally biased region" description="Low complexity" evidence="4">
    <location>
        <begin position="29"/>
        <end position="38"/>
    </location>
</feature>
<feature type="compositionally biased region" description="Low complexity" evidence="4">
    <location>
        <begin position="245"/>
        <end position="257"/>
    </location>
</feature>
<feature type="compositionally biased region" description="Low complexity" evidence="4">
    <location>
        <begin position="393"/>
        <end position="403"/>
    </location>
</feature>
<feature type="modified residue" description="N-acetylalanine" evidence="2">
    <location>
        <position position="2"/>
    </location>
</feature>
<feature type="modified residue" description="Phosphoserine" evidence="1">
    <location>
        <position position="189"/>
    </location>
</feature>
<feature type="modified residue" description="Phosphoserine" evidence="2">
    <location>
        <position position="193"/>
    </location>
</feature>
<feature type="modified residue" description="Phosphoserine" evidence="2">
    <location>
        <position position="200"/>
    </location>
</feature>
<feature type="modified residue" description="Phosphoserine" evidence="2">
    <location>
        <position position="204"/>
    </location>
</feature>
<gene>
    <name type="primary">RABEP2</name>
</gene>
<reference key="1">
    <citation type="submission" date="2004-11" db="EMBL/GenBank/DDBJ databases">
        <authorList>
            <consortium name="The German cDNA consortium"/>
        </authorList>
    </citation>
    <scope>NUCLEOTIDE SEQUENCE [LARGE SCALE MRNA]</scope>
    <source>
        <tissue>Kidney</tissue>
    </source>
</reference>
<evidence type="ECO:0000250" key="1">
    <source>
        <dbReference type="UniProtKB" id="Q62835"/>
    </source>
</evidence>
<evidence type="ECO:0000250" key="2">
    <source>
        <dbReference type="UniProtKB" id="Q9H5N1"/>
    </source>
</evidence>
<evidence type="ECO:0000255" key="3"/>
<evidence type="ECO:0000256" key="4">
    <source>
        <dbReference type="SAM" id="MobiDB-lite"/>
    </source>
</evidence>
<evidence type="ECO:0000305" key="5"/>
<organism>
    <name type="scientific">Pongo abelii</name>
    <name type="common">Sumatran orangutan</name>
    <name type="synonym">Pongo pygmaeus abelii</name>
    <dbReference type="NCBI Taxonomy" id="9601"/>
    <lineage>
        <taxon>Eukaryota</taxon>
        <taxon>Metazoa</taxon>
        <taxon>Chordata</taxon>
        <taxon>Craniata</taxon>
        <taxon>Vertebrata</taxon>
        <taxon>Euteleostomi</taxon>
        <taxon>Mammalia</taxon>
        <taxon>Eutheria</taxon>
        <taxon>Euarchontoglires</taxon>
        <taxon>Primates</taxon>
        <taxon>Haplorrhini</taxon>
        <taxon>Catarrhini</taxon>
        <taxon>Hominidae</taxon>
        <taxon>Pongo</taxon>
    </lineage>
</organism>
<accession>Q5RCR6</accession>
<name>RABE2_PONAB</name>
<dbReference type="EMBL" id="CR858203">
    <property type="protein sequence ID" value="CAH90441.1"/>
    <property type="status" value="ALT_SEQ"/>
    <property type="molecule type" value="mRNA"/>
</dbReference>
<dbReference type="RefSeq" id="NP_001127288.1">
    <property type="nucleotide sequence ID" value="NM_001133816.1"/>
</dbReference>
<dbReference type="SMR" id="Q5RCR6"/>
<dbReference type="FunCoup" id="Q5RCR6">
    <property type="interactions" value="700"/>
</dbReference>
<dbReference type="STRING" id="9601.ENSPPYP00000008167"/>
<dbReference type="GeneID" id="100174345"/>
<dbReference type="KEGG" id="pon:100174345"/>
<dbReference type="CTD" id="79874"/>
<dbReference type="eggNOG" id="KOG0993">
    <property type="taxonomic scope" value="Eukaryota"/>
</dbReference>
<dbReference type="InParanoid" id="Q5RCR6"/>
<dbReference type="OrthoDB" id="79940at2759"/>
<dbReference type="Proteomes" id="UP000001595">
    <property type="component" value="Unplaced"/>
</dbReference>
<dbReference type="GO" id="GO:0042995">
    <property type="term" value="C:cell projection"/>
    <property type="evidence" value="ECO:0007669"/>
    <property type="project" value="UniProtKB-KW"/>
</dbReference>
<dbReference type="GO" id="GO:0005813">
    <property type="term" value="C:centrosome"/>
    <property type="evidence" value="ECO:0007669"/>
    <property type="project" value="UniProtKB-SubCell"/>
</dbReference>
<dbReference type="GO" id="GO:0005769">
    <property type="term" value="C:early endosome"/>
    <property type="evidence" value="ECO:0007669"/>
    <property type="project" value="UniProtKB-SubCell"/>
</dbReference>
<dbReference type="GO" id="GO:0008083">
    <property type="term" value="F:growth factor activity"/>
    <property type="evidence" value="ECO:0007669"/>
    <property type="project" value="InterPro"/>
</dbReference>
<dbReference type="GO" id="GO:0005096">
    <property type="term" value="F:GTPase activator activity"/>
    <property type="evidence" value="ECO:0007669"/>
    <property type="project" value="InterPro"/>
</dbReference>
<dbReference type="GO" id="GO:0030030">
    <property type="term" value="P:cell projection organization"/>
    <property type="evidence" value="ECO:0007669"/>
    <property type="project" value="UniProtKB-KW"/>
</dbReference>
<dbReference type="GO" id="GO:0006897">
    <property type="term" value="P:endocytosis"/>
    <property type="evidence" value="ECO:0007669"/>
    <property type="project" value="UniProtKB-KW"/>
</dbReference>
<dbReference type="GO" id="GO:0015031">
    <property type="term" value="P:protein transport"/>
    <property type="evidence" value="ECO:0007669"/>
    <property type="project" value="UniProtKB-KW"/>
</dbReference>
<dbReference type="FunFam" id="1.20.5.340:FF:000028">
    <property type="entry name" value="rab GTPase-binding effector protein 2 isoform X1"/>
    <property type="match status" value="1"/>
</dbReference>
<dbReference type="FunFam" id="1.20.5.730:FF:000003">
    <property type="entry name" value="rab GTPase-binding effector protein 2 isoform X1"/>
    <property type="match status" value="1"/>
</dbReference>
<dbReference type="Gene3D" id="1.20.5.340">
    <property type="match status" value="1"/>
</dbReference>
<dbReference type="Gene3D" id="1.20.5.730">
    <property type="entry name" value="Single helix bin"/>
    <property type="match status" value="1"/>
</dbReference>
<dbReference type="InterPro" id="IPR003914">
    <property type="entry name" value="Rabaptin"/>
</dbReference>
<dbReference type="InterPro" id="IPR018514">
    <property type="entry name" value="Rabaptin_coiled-coil"/>
</dbReference>
<dbReference type="InterPro" id="IPR015390">
    <property type="entry name" value="Rabaptin_Rab5-bd_dom"/>
</dbReference>
<dbReference type="PANTHER" id="PTHR31179">
    <property type="entry name" value="RAB GTPASE-BINDING EFFECTOR PROTEIN"/>
    <property type="match status" value="1"/>
</dbReference>
<dbReference type="PANTHER" id="PTHR31179:SF6">
    <property type="entry name" value="RAB GTPASE-BINDING EFFECTOR PROTEIN 2"/>
    <property type="match status" value="1"/>
</dbReference>
<dbReference type="Pfam" id="PF09311">
    <property type="entry name" value="Rab5-bind"/>
    <property type="match status" value="2"/>
</dbReference>
<dbReference type="Pfam" id="PF03528">
    <property type="entry name" value="Rabaptin"/>
    <property type="match status" value="1"/>
</dbReference>
<dbReference type="PRINTS" id="PR01432">
    <property type="entry name" value="RABAPTIN"/>
</dbReference>
<dbReference type="SUPFAM" id="SSF103652">
    <property type="entry name" value="G protein-binding domain"/>
    <property type="match status" value="2"/>
</dbReference>
<keyword id="KW-0007">Acetylation</keyword>
<keyword id="KW-0966">Cell projection</keyword>
<keyword id="KW-0970">Cilium biogenesis/degradation</keyword>
<keyword id="KW-0175">Coiled coil</keyword>
<keyword id="KW-0963">Cytoplasm</keyword>
<keyword id="KW-0206">Cytoskeleton</keyword>
<keyword id="KW-0254">Endocytosis</keyword>
<keyword id="KW-0967">Endosome</keyword>
<keyword id="KW-0597">Phosphoprotein</keyword>
<keyword id="KW-0653">Protein transport</keyword>
<keyword id="KW-1185">Reference proteome</keyword>
<keyword id="KW-0813">Transport</keyword>
<proteinExistence type="evidence at transcript level"/>
<protein>
    <recommendedName>
        <fullName>Rab GTPase-binding effector protein 2</fullName>
    </recommendedName>
</protein>
<sequence>MAAAAPVAADDDERRRRPGAALEDSRPQEGANGEAELGELSRLRAELAGALAEMETMKAVAEVSESTKAEAVAAVQRQCQEEVASLQAILKDSISSYEAQITALKQERQQQQQDCEEKERELGRLKQLLSRAHPLDSLEKQMEKAHEDSEKLREIVLPMEKEIEELKAKLLRAEELIQEIQRRPQHVPSLHGSTELLPLSRDPSPPLEPLEELSGDGGPAAEAFAHNCDDSASISSFSLGGGVGSSSSLPRSRQGLSPEQEETASLVSTGTLVPEGIYLPPPGYQLVPDTQWEQLQMEGRQLQKDLESVSRERDELQEGLRRSNEDCAKQMQVLLAQVQNAEQLLRTLQGTVSQAQERVQLQMAELVTTHKCLHHEVKRLNEENQGLRAEQLPSSAPQGPQQEQGEEESLPSSVPELQQLLCRTRQEARAQLQAQEHGAERLRIEIVTLREALEEETAARASLEGQLRVQREETEVLEASLCSLRTEMERVQQEQSKPQLPDLLSEQRAKVLRLQAELETSEQVQRDFVRLSQALQVRLERIRQAETLEQVHSIMDEAPLTDVRDIKDT</sequence>
<comment type="function">
    <text evidence="2">Plays a role in membrane trafficking and in homotypic early endosome fusion. Participates in arteriogenesis by regulating vascular endothelial growth factor receptor 2/VEGFR2 cell surface expression and endosomal trafficking. By interacting with SDCCAG8, localizes to centrosomes and plays a critical role in ciliogenesis.</text>
</comment>
<comment type="subunit">
    <text evidence="2">Heterodimer with RABGEF1. The dimer binds RAB5A that has been activated by GTP-binding. Interacts with SDCCAG8; this interaction is important for ciliogenesis regulation. Interacts with RAB4; this interaction may mediate VEGFR2 cell surface expression.</text>
</comment>
<comment type="subcellular location">
    <subcellularLocation>
        <location evidence="2">Cytoplasm</location>
    </subcellularLocation>
    <subcellularLocation>
        <location evidence="2">Early endosome</location>
    </subcellularLocation>
    <subcellularLocation>
        <location evidence="2">Cytoplasm</location>
        <location evidence="2">Cytoskeleton</location>
        <location evidence="2">Microtubule organizing center</location>
        <location evidence="2">Centrosome</location>
    </subcellularLocation>
    <subcellularLocation>
        <location evidence="2">Cytoplasm</location>
        <location evidence="2">Cytoskeleton</location>
        <location evidence="2">Cilium basal body</location>
    </subcellularLocation>
</comment>
<comment type="similarity">
    <text evidence="5">Belongs to the rabaptin family.</text>
</comment>
<comment type="sequence caution" evidence="5">
    <conflict type="erroneous gene model prediction">
        <sequence resource="EMBL-CDS" id="CAH90441"/>
    </conflict>
</comment>